<accession>Q88QV3</accession>
<gene>
    <name type="primary">pqqF</name>
    <name type="ordered locus">PP_0381</name>
</gene>
<keyword id="KW-0378">Hydrolase</keyword>
<keyword id="KW-0479">Metal-binding</keyword>
<keyword id="KW-0482">Metalloprotease</keyword>
<keyword id="KW-0884">PQQ biosynthesis</keyword>
<keyword id="KW-0645">Protease</keyword>
<keyword id="KW-1185">Reference proteome</keyword>
<keyword id="KW-0862">Zinc</keyword>
<name>PQQF_PSEPK</name>
<feature type="chain" id="PRO_0000074413" description="Coenzyme PQQ synthesis protein F">
    <location>
        <begin position="1"/>
        <end position="766"/>
    </location>
</feature>
<feature type="active site" description="Proton acceptor" evidence="2">
    <location>
        <position position="52"/>
    </location>
</feature>
<feature type="binding site" evidence="2">
    <location>
        <position position="49"/>
    </location>
    <ligand>
        <name>Zn(2+)</name>
        <dbReference type="ChEBI" id="CHEBI:29105"/>
    </ligand>
</feature>
<feature type="binding site" evidence="2">
    <location>
        <position position="53"/>
    </location>
    <ligand>
        <name>Zn(2+)</name>
        <dbReference type="ChEBI" id="CHEBI:29105"/>
    </ligand>
</feature>
<feature type="binding site" evidence="2">
    <location>
        <position position="130"/>
    </location>
    <ligand>
        <name>Zn(2+)</name>
        <dbReference type="ChEBI" id="CHEBI:29105"/>
    </ligand>
</feature>
<reference key="1">
    <citation type="journal article" date="2002" name="Environ. Microbiol.">
        <title>Complete genome sequence and comparative analysis of the metabolically versatile Pseudomonas putida KT2440.</title>
        <authorList>
            <person name="Nelson K.E."/>
            <person name="Weinel C."/>
            <person name="Paulsen I.T."/>
            <person name="Dodson R.J."/>
            <person name="Hilbert H."/>
            <person name="Martins dos Santos V.A.P."/>
            <person name="Fouts D.E."/>
            <person name="Gill S.R."/>
            <person name="Pop M."/>
            <person name="Holmes M."/>
            <person name="Brinkac L.M."/>
            <person name="Beanan M.J."/>
            <person name="DeBoy R.T."/>
            <person name="Daugherty S.C."/>
            <person name="Kolonay J.F."/>
            <person name="Madupu R."/>
            <person name="Nelson W.C."/>
            <person name="White O."/>
            <person name="Peterson J.D."/>
            <person name="Khouri H.M."/>
            <person name="Hance I."/>
            <person name="Chris Lee P."/>
            <person name="Holtzapple E.K."/>
            <person name="Scanlan D."/>
            <person name="Tran K."/>
            <person name="Moazzez A."/>
            <person name="Utterback T.R."/>
            <person name="Rizzo M."/>
            <person name="Lee K."/>
            <person name="Kosack D."/>
            <person name="Moestl D."/>
            <person name="Wedler H."/>
            <person name="Lauber J."/>
            <person name="Stjepandic D."/>
            <person name="Hoheisel J."/>
            <person name="Straetz M."/>
            <person name="Heim S."/>
            <person name="Kiewitz C."/>
            <person name="Eisen J.A."/>
            <person name="Timmis K.N."/>
            <person name="Duesterhoeft A."/>
            <person name="Tuemmler B."/>
            <person name="Fraser C.M."/>
        </authorList>
    </citation>
    <scope>NUCLEOTIDE SEQUENCE [LARGE SCALE GENOMIC DNA]</scope>
    <source>
        <strain>ATCC 47054 / DSM 6125 / CFBP 8728 / NCIMB 11950 / KT2440</strain>
    </source>
</reference>
<sequence length="766" mass="84242">MPDAIRQLTLANGLQLTLRHAPRLKRSAAALRVHAGSHDAPAKWPGLAHFLEHLFFLGTPRFPLEDGLMRYVQALGGQVNASTRERATDFFFEVPPNALGGGLERLCQMLAEPDLGIERQRREREVIHAEFIAWSRNPTAQQQFALLQSVSARHPLGAFHAGNRYTLALHDAAFQQALAGFHQRFYQGGQICLSLCGPQPLDELERLARQQAELFAAGERVPQILPPPLPAMASALTFTHQSLPSGAEHALELLIAYLEDSRPGTWLGALRERGWLRRFTAERLYAFAGQLLWHLDLKLSADACPDEASALLQGWFRFIRQADREQLNHQFGLLQHSRAHSASALELARRDSTGQPFAKLDTQGLQALGALLESLPGADHGDWQLLPVDPLLKADLPHAKAQPLPAALKISDQLPPARQFAALYLRWHVPSPMRQPLQRVLEQALAPLQERCDRASVQLQYSSAGEYWQLHCAGLPAAVLRAVEQALALMLKPPASCWLPCTALPPALIPIRALLKQLPDAVRGSLPPAVPACTLTQQQLDSLWLHTEWHGMAAGFEDTALKALGAALEQCPGQGSRPSPLPTWANHRWQHAQVPGSEHALLLFCPLPAAKEAAGRLLAQLLQGPVYQRLRVDLQLGYAVFSAFRQVEGVGGLLFGVQSPHTDQAQVLDHLLNLLRHGVTLDPAARQALAGQFDEPAMANADVAEWAWQTHLATQADRLDVLRRSILTTRQTDLDHLLSALLDPGSAWLCLANAAAPDTSWQGENR</sequence>
<organism>
    <name type="scientific">Pseudomonas putida (strain ATCC 47054 / DSM 6125 / CFBP 8728 / NCIMB 11950 / KT2440)</name>
    <dbReference type="NCBI Taxonomy" id="160488"/>
    <lineage>
        <taxon>Bacteria</taxon>
        <taxon>Pseudomonadati</taxon>
        <taxon>Pseudomonadota</taxon>
        <taxon>Gammaproteobacteria</taxon>
        <taxon>Pseudomonadales</taxon>
        <taxon>Pseudomonadaceae</taxon>
        <taxon>Pseudomonas</taxon>
    </lineage>
</organism>
<protein>
    <recommendedName>
        <fullName>Coenzyme PQQ synthesis protein F</fullName>
        <ecNumber>3.4.24.-</ecNumber>
    </recommendedName>
    <alternativeName>
        <fullName>Pyrroloquinoline quinone biosynthesis protein F</fullName>
    </alternativeName>
</protein>
<evidence type="ECO:0000250" key="1"/>
<evidence type="ECO:0000255" key="2">
    <source>
        <dbReference type="PROSITE-ProRule" id="PRU10096"/>
    </source>
</evidence>
<evidence type="ECO:0000305" key="3"/>
<comment type="function">
    <text evidence="1">Required for coenzyme pyrroloquinoline quinone (PQQ) biosynthesis. It is thought that this protein is a protease that cleaves peptides bond in a small peptide (gene pqqA), providing the glutamate and tyrosine residues which are necessary for the synthesis of PQQ (By similarity).</text>
</comment>
<comment type="cofactor">
    <cofactor evidence="1">
        <name>Zn(2+)</name>
        <dbReference type="ChEBI" id="CHEBI:29105"/>
    </cofactor>
    <text evidence="1">Binds 1 zinc ion per subunit.</text>
</comment>
<comment type="pathway">
    <text>Cofactor biosynthesis; pyrroloquinoline quinone biosynthesis.</text>
</comment>
<comment type="similarity">
    <text evidence="3">Belongs to the peptidase M16 family.</text>
</comment>
<proteinExistence type="inferred from homology"/>
<dbReference type="EC" id="3.4.24.-"/>
<dbReference type="EMBL" id="AE015451">
    <property type="protein sequence ID" value="AAN66012.1"/>
    <property type="molecule type" value="Genomic_DNA"/>
</dbReference>
<dbReference type="RefSeq" id="NP_742548.1">
    <property type="nucleotide sequence ID" value="NC_002947.4"/>
</dbReference>
<dbReference type="RefSeq" id="WP_010951730.1">
    <property type="nucleotide sequence ID" value="NZ_CP169744.1"/>
</dbReference>
<dbReference type="SMR" id="Q88QV3"/>
<dbReference type="STRING" id="160488.PP_0381"/>
<dbReference type="PaxDb" id="160488-PP_0381"/>
<dbReference type="GeneID" id="83677658"/>
<dbReference type="KEGG" id="ppu:PP_0381"/>
<dbReference type="PATRIC" id="fig|160488.4.peg.410"/>
<dbReference type="eggNOG" id="COG1025">
    <property type="taxonomic scope" value="Bacteria"/>
</dbReference>
<dbReference type="HOGENOM" id="CLU_021089_0_0_6"/>
<dbReference type="OrthoDB" id="9811314at2"/>
<dbReference type="PhylomeDB" id="Q88QV3"/>
<dbReference type="BioCyc" id="PPUT160488:G1G01-416-MONOMER"/>
<dbReference type="UniPathway" id="UPA00539"/>
<dbReference type="Proteomes" id="UP000000556">
    <property type="component" value="Chromosome"/>
</dbReference>
<dbReference type="GO" id="GO:0004222">
    <property type="term" value="F:metalloendopeptidase activity"/>
    <property type="evidence" value="ECO:0007669"/>
    <property type="project" value="InterPro"/>
</dbReference>
<dbReference type="GO" id="GO:0008270">
    <property type="term" value="F:zinc ion binding"/>
    <property type="evidence" value="ECO:0007669"/>
    <property type="project" value="InterPro"/>
</dbReference>
<dbReference type="GO" id="GO:0006508">
    <property type="term" value="P:proteolysis"/>
    <property type="evidence" value="ECO:0007669"/>
    <property type="project" value="UniProtKB-KW"/>
</dbReference>
<dbReference type="GO" id="GO:0018189">
    <property type="term" value="P:pyrroloquinoline quinone biosynthetic process"/>
    <property type="evidence" value="ECO:0007669"/>
    <property type="project" value="UniProtKB-UniPathway"/>
</dbReference>
<dbReference type="Gene3D" id="3.30.830.10">
    <property type="entry name" value="Metalloenzyme, LuxS/M16 peptidase-like"/>
    <property type="match status" value="2"/>
</dbReference>
<dbReference type="InterPro" id="IPR011249">
    <property type="entry name" value="Metalloenz_LuxS/M16"/>
</dbReference>
<dbReference type="InterPro" id="IPR011765">
    <property type="entry name" value="Pept_M16_N"/>
</dbReference>
<dbReference type="InterPro" id="IPR001431">
    <property type="entry name" value="Pept_M16_Zn_BS"/>
</dbReference>
<dbReference type="InterPro" id="IPR050626">
    <property type="entry name" value="Peptidase_M16"/>
</dbReference>
<dbReference type="InterPro" id="IPR011844">
    <property type="entry name" value="PQQ_synth_PqqF"/>
</dbReference>
<dbReference type="InterPro" id="IPR054734">
    <property type="entry name" value="PqqF-like_C_4"/>
</dbReference>
<dbReference type="InterPro" id="IPR054733">
    <property type="entry name" value="PqqF_C_3"/>
</dbReference>
<dbReference type="NCBIfam" id="TIGR02110">
    <property type="entry name" value="PQQ_syn_pqqF"/>
    <property type="match status" value="1"/>
</dbReference>
<dbReference type="PANTHER" id="PTHR43690:SF18">
    <property type="entry name" value="INSULIN-DEGRADING ENZYME-RELATED"/>
    <property type="match status" value="1"/>
</dbReference>
<dbReference type="PANTHER" id="PTHR43690">
    <property type="entry name" value="NARDILYSIN"/>
    <property type="match status" value="1"/>
</dbReference>
<dbReference type="Pfam" id="PF00675">
    <property type="entry name" value="Peptidase_M16"/>
    <property type="match status" value="1"/>
</dbReference>
<dbReference type="Pfam" id="PF22456">
    <property type="entry name" value="PqqF-like_C_4"/>
    <property type="match status" value="1"/>
</dbReference>
<dbReference type="Pfam" id="PF22455">
    <property type="entry name" value="PqqF_C_3"/>
    <property type="match status" value="1"/>
</dbReference>
<dbReference type="SUPFAM" id="SSF63411">
    <property type="entry name" value="LuxS/MPP-like metallohydrolase"/>
    <property type="match status" value="2"/>
</dbReference>
<dbReference type="PROSITE" id="PS00143">
    <property type="entry name" value="INSULINASE"/>
    <property type="match status" value="1"/>
</dbReference>